<organism>
    <name type="scientific">Mycoplasmopsis synoviae (strain 53)</name>
    <name type="common">Mycoplasma synoviae</name>
    <dbReference type="NCBI Taxonomy" id="262723"/>
    <lineage>
        <taxon>Bacteria</taxon>
        <taxon>Bacillati</taxon>
        <taxon>Mycoplasmatota</taxon>
        <taxon>Mycoplasmoidales</taxon>
        <taxon>Metamycoplasmataceae</taxon>
        <taxon>Mycoplasmopsis</taxon>
    </lineage>
</organism>
<evidence type="ECO:0000255" key="1">
    <source>
        <dbReference type="HAMAP-Rule" id="MF_01710"/>
    </source>
</evidence>
<gene>
    <name evidence="1" type="primary">ecfA2</name>
    <name type="synonym">cbiO2</name>
    <name type="ordered locus">MS53_0660</name>
</gene>
<reference key="1">
    <citation type="journal article" date="2005" name="J. Bacteriol.">
        <title>Swine and poultry pathogens: the complete genome sequences of two strains of Mycoplasma hyopneumoniae and a strain of Mycoplasma synoviae.</title>
        <authorList>
            <person name="Vasconcelos A.T.R."/>
            <person name="Ferreira H.B."/>
            <person name="Bizarro C.V."/>
            <person name="Bonatto S.L."/>
            <person name="Carvalho M.O."/>
            <person name="Pinto P.M."/>
            <person name="Almeida D.F."/>
            <person name="Almeida L.G.P."/>
            <person name="Almeida R."/>
            <person name="Alves-Junior L."/>
            <person name="Assuncao E.N."/>
            <person name="Azevedo V.A.C."/>
            <person name="Bogo M.R."/>
            <person name="Brigido M.M."/>
            <person name="Brocchi M."/>
            <person name="Burity H.A."/>
            <person name="Camargo A.A."/>
            <person name="Camargo S.S."/>
            <person name="Carepo M.S."/>
            <person name="Carraro D.M."/>
            <person name="de Mattos Cascardo J.C."/>
            <person name="Castro L.A."/>
            <person name="Cavalcanti G."/>
            <person name="Chemale G."/>
            <person name="Collevatti R.G."/>
            <person name="Cunha C.W."/>
            <person name="Dallagiovanna B."/>
            <person name="Dambros B.P."/>
            <person name="Dellagostin O.A."/>
            <person name="Falcao C."/>
            <person name="Fantinatti-Garboggini F."/>
            <person name="Felipe M.S.S."/>
            <person name="Fiorentin L."/>
            <person name="Franco G.R."/>
            <person name="Freitas N.S.A."/>
            <person name="Frias D."/>
            <person name="Grangeiro T.B."/>
            <person name="Grisard E.C."/>
            <person name="Guimaraes C.T."/>
            <person name="Hungria M."/>
            <person name="Jardim S.N."/>
            <person name="Krieger M.A."/>
            <person name="Laurino J.P."/>
            <person name="Lima L.F.A."/>
            <person name="Lopes M.I."/>
            <person name="Loreto E.L.S."/>
            <person name="Madeira H.M.F."/>
            <person name="Manfio G.P."/>
            <person name="Maranhao A.Q."/>
            <person name="Martinkovics C.T."/>
            <person name="Medeiros S.R.B."/>
            <person name="Moreira M.A.M."/>
            <person name="Neiva M."/>
            <person name="Ramalho-Neto C.E."/>
            <person name="Nicolas M.F."/>
            <person name="Oliveira S.C."/>
            <person name="Paixao R.F.C."/>
            <person name="Pedrosa F.O."/>
            <person name="Pena S.D.J."/>
            <person name="Pereira M."/>
            <person name="Pereira-Ferrari L."/>
            <person name="Piffer I."/>
            <person name="Pinto L.S."/>
            <person name="Potrich D.P."/>
            <person name="Salim A.C.M."/>
            <person name="Santos F.R."/>
            <person name="Schmitt R."/>
            <person name="Schneider M.P.C."/>
            <person name="Schrank A."/>
            <person name="Schrank I.S."/>
            <person name="Schuck A.F."/>
            <person name="Seuanez H.N."/>
            <person name="Silva D.W."/>
            <person name="Silva R."/>
            <person name="Silva S.C."/>
            <person name="Soares C.M.A."/>
            <person name="Souza K.R.L."/>
            <person name="Souza R.C."/>
            <person name="Staats C.C."/>
            <person name="Steffens M.B.R."/>
            <person name="Teixeira S.M.R."/>
            <person name="Urmenyi T.P."/>
            <person name="Vainstein M.H."/>
            <person name="Zuccherato L.W."/>
            <person name="Simpson A.J.G."/>
            <person name="Zaha A."/>
        </authorList>
    </citation>
    <scope>NUCLEOTIDE SEQUENCE [LARGE SCALE GENOMIC DNA]</scope>
    <source>
        <strain>53</strain>
    </source>
</reference>
<keyword id="KW-0067">ATP-binding</keyword>
<keyword id="KW-1003">Cell membrane</keyword>
<keyword id="KW-0472">Membrane</keyword>
<keyword id="KW-0547">Nucleotide-binding</keyword>
<keyword id="KW-1185">Reference proteome</keyword>
<keyword id="KW-1278">Translocase</keyword>
<keyword id="KW-0813">Transport</keyword>
<comment type="function">
    <text evidence="1">ATP-binding (A) component of a common energy-coupling factor (ECF) ABC-transporter complex. Unlike classic ABC transporters this ECF transporter provides the energy necessary to transport a number of different substrates.</text>
</comment>
<comment type="subunit">
    <text evidence="1">Forms a stable energy-coupling factor (ECF) transporter complex composed of 2 membrane-embedded substrate-binding proteins (S component), 2 ATP-binding proteins (A component) and 2 transmembrane proteins (T component).</text>
</comment>
<comment type="subcellular location">
    <subcellularLocation>
        <location evidence="1">Cell membrane</location>
        <topology evidence="1">Peripheral membrane protein</topology>
    </subcellularLocation>
</comment>
<comment type="similarity">
    <text evidence="1">Belongs to the ABC transporter superfamily. Energy-coupling factor EcfA family.</text>
</comment>
<feature type="chain" id="PRO_0000287975" description="Energy-coupling factor transporter ATP-binding protein EcfA2">
    <location>
        <begin position="1"/>
        <end position="311"/>
    </location>
</feature>
<feature type="domain" description="ABC transporter" evidence="1">
    <location>
        <begin position="3"/>
        <end position="265"/>
    </location>
</feature>
<feature type="binding site" evidence="1">
    <location>
        <begin position="40"/>
        <end position="47"/>
    </location>
    <ligand>
        <name>ATP</name>
        <dbReference type="ChEBI" id="CHEBI:30616"/>
    </ligand>
</feature>
<name>ECFA2_MYCS5</name>
<protein>
    <recommendedName>
        <fullName evidence="1">Energy-coupling factor transporter ATP-binding protein EcfA2</fullName>
        <shortName evidence="1">ECF transporter A component EcfA2</shortName>
        <ecNumber evidence="1">7.-.-.-</ecNumber>
    </recommendedName>
</protein>
<proteinExistence type="inferred from homology"/>
<dbReference type="EC" id="7.-.-.-" evidence="1"/>
<dbReference type="EMBL" id="AE017245">
    <property type="protein sequence ID" value="AAZ44067.1"/>
    <property type="molecule type" value="Genomic_DNA"/>
</dbReference>
<dbReference type="RefSeq" id="WP_011283796.1">
    <property type="nucleotide sequence ID" value="NC_007294.1"/>
</dbReference>
<dbReference type="SMR" id="Q4A5A4"/>
<dbReference type="STRING" id="262723.MS53_0660"/>
<dbReference type="KEGG" id="msy:MS53_0660"/>
<dbReference type="eggNOG" id="COG1122">
    <property type="taxonomic scope" value="Bacteria"/>
</dbReference>
<dbReference type="HOGENOM" id="CLU_000604_1_22_14"/>
<dbReference type="OrthoDB" id="9784332at2"/>
<dbReference type="Proteomes" id="UP000000549">
    <property type="component" value="Chromosome"/>
</dbReference>
<dbReference type="GO" id="GO:0043190">
    <property type="term" value="C:ATP-binding cassette (ABC) transporter complex"/>
    <property type="evidence" value="ECO:0007669"/>
    <property type="project" value="TreeGrafter"/>
</dbReference>
<dbReference type="GO" id="GO:0005524">
    <property type="term" value="F:ATP binding"/>
    <property type="evidence" value="ECO:0007669"/>
    <property type="project" value="UniProtKB-KW"/>
</dbReference>
<dbReference type="GO" id="GO:0016887">
    <property type="term" value="F:ATP hydrolysis activity"/>
    <property type="evidence" value="ECO:0007669"/>
    <property type="project" value="InterPro"/>
</dbReference>
<dbReference type="GO" id="GO:0042626">
    <property type="term" value="F:ATPase-coupled transmembrane transporter activity"/>
    <property type="evidence" value="ECO:0007669"/>
    <property type="project" value="TreeGrafter"/>
</dbReference>
<dbReference type="CDD" id="cd03225">
    <property type="entry name" value="ABC_cobalt_CbiO_domain1"/>
    <property type="match status" value="1"/>
</dbReference>
<dbReference type="FunFam" id="3.40.50.300:FF:000224">
    <property type="entry name" value="Energy-coupling factor transporter ATP-binding protein EcfA"/>
    <property type="match status" value="1"/>
</dbReference>
<dbReference type="Gene3D" id="3.40.50.300">
    <property type="entry name" value="P-loop containing nucleotide triphosphate hydrolases"/>
    <property type="match status" value="1"/>
</dbReference>
<dbReference type="InterPro" id="IPR003593">
    <property type="entry name" value="AAA+_ATPase"/>
</dbReference>
<dbReference type="InterPro" id="IPR003439">
    <property type="entry name" value="ABC_transporter-like_ATP-bd"/>
</dbReference>
<dbReference type="InterPro" id="IPR017871">
    <property type="entry name" value="ABC_transporter-like_CS"/>
</dbReference>
<dbReference type="InterPro" id="IPR015856">
    <property type="entry name" value="ABC_transpr_CbiO/EcfA_su"/>
</dbReference>
<dbReference type="InterPro" id="IPR050095">
    <property type="entry name" value="ECF_ABC_transporter_ATP-bd"/>
</dbReference>
<dbReference type="InterPro" id="IPR030946">
    <property type="entry name" value="EcfA2"/>
</dbReference>
<dbReference type="InterPro" id="IPR027417">
    <property type="entry name" value="P-loop_NTPase"/>
</dbReference>
<dbReference type="NCBIfam" id="TIGR04521">
    <property type="entry name" value="ECF_ATPase_2"/>
    <property type="match status" value="1"/>
</dbReference>
<dbReference type="NCBIfam" id="NF010170">
    <property type="entry name" value="PRK13651.1"/>
    <property type="match status" value="1"/>
</dbReference>
<dbReference type="PANTHER" id="PTHR43553:SF27">
    <property type="entry name" value="ENERGY-COUPLING FACTOR TRANSPORTER ATP-BINDING PROTEIN ECFA2"/>
    <property type="match status" value="1"/>
</dbReference>
<dbReference type="PANTHER" id="PTHR43553">
    <property type="entry name" value="HEAVY METAL TRANSPORTER"/>
    <property type="match status" value="1"/>
</dbReference>
<dbReference type="Pfam" id="PF00005">
    <property type="entry name" value="ABC_tran"/>
    <property type="match status" value="1"/>
</dbReference>
<dbReference type="SMART" id="SM00382">
    <property type="entry name" value="AAA"/>
    <property type="match status" value="1"/>
</dbReference>
<dbReference type="SUPFAM" id="SSF52540">
    <property type="entry name" value="P-loop containing nucleoside triphosphate hydrolases"/>
    <property type="match status" value="1"/>
</dbReference>
<dbReference type="PROSITE" id="PS00211">
    <property type="entry name" value="ABC_TRANSPORTER_1"/>
    <property type="match status" value="1"/>
</dbReference>
<dbReference type="PROSITE" id="PS50893">
    <property type="entry name" value="ABC_TRANSPORTER_2"/>
    <property type="match status" value="1"/>
</dbReference>
<dbReference type="PROSITE" id="PS51246">
    <property type="entry name" value="CBIO"/>
    <property type="match status" value="1"/>
</dbReference>
<accession>Q4A5A4</accession>
<sequence length="311" mass="35249">MQIKLKDVKFTFNLKSSWEFQALHGIDFEVNQGEYVGIIGQTGSGKTTLIEHLNALLMPTTGTVEWIYKDEVFDKATKTKKEVVVTDVIGLKKVRKFKKVKQIRKRIGVVFQFAEYQLFKATVLEDIIFGPVSYGMDPKEAEEKAKKYIKLVGLPEEYLKRSPFDLSGGQKRRVALAGILAMEPDVLVVDEPTAGLDPWGVKEILDILTHLHESGKTIINVTHDLDHVLERAKRVIVLKNGKIIKDGQPYETLNDIAFLEENNLQPPKLLNFVNKLRAKGVNVPKVTSEAELVSWINDYMETKNKKEVSNE</sequence>